<name>ATPI_POPTR</name>
<proteinExistence type="inferred from homology"/>
<geneLocation type="chloroplast"/>
<accession>A4GYP6</accession>
<protein>
    <recommendedName>
        <fullName evidence="1">ATP synthase subunit a, chloroplastic</fullName>
    </recommendedName>
    <alternativeName>
        <fullName evidence="1">ATP synthase F0 sector subunit a</fullName>
    </alternativeName>
    <alternativeName>
        <fullName evidence="1">F-ATPase subunit IV</fullName>
    </alternativeName>
</protein>
<feature type="chain" id="PRO_0000362594" description="ATP synthase subunit a, chloroplastic">
    <location>
        <begin position="1"/>
        <end position="247"/>
    </location>
</feature>
<feature type="transmembrane region" description="Helical" evidence="1">
    <location>
        <begin position="38"/>
        <end position="58"/>
    </location>
</feature>
<feature type="transmembrane region" description="Helical" evidence="1">
    <location>
        <begin position="95"/>
        <end position="115"/>
    </location>
</feature>
<feature type="transmembrane region" description="Helical" evidence="1">
    <location>
        <begin position="134"/>
        <end position="154"/>
    </location>
</feature>
<feature type="transmembrane region" description="Helical" evidence="1">
    <location>
        <begin position="199"/>
        <end position="219"/>
    </location>
</feature>
<feature type="transmembrane region" description="Helical" evidence="1">
    <location>
        <begin position="220"/>
        <end position="240"/>
    </location>
</feature>
<sequence>MNVLSYSINTLKGLYEISGVEVGQHFYWKIGGFQVHAQVLITSWVVIVILLGSAIVTVRNPQTIPTDGQNFFEYILEFIRDVSKTQIGEEYGPWVPFIGTLFLFIFVSNWSGALLPWKIIELPHGELAAPTNDINTTVALALLTSIAYFYAGLSKKGLGYFGKYIQPTPILLPINILEDFTKPLSLSFRLFGNILADELVVVVLVSLVPSVVPIPVMFLGLFTSGIQALIFATLAAAYIGESMEGHH</sequence>
<comment type="function">
    <text evidence="1">Key component of the proton channel; it plays a direct role in the translocation of protons across the membrane.</text>
</comment>
<comment type="subunit">
    <text evidence="1">F-type ATPases have 2 components, CF(1) - the catalytic core - and CF(0) - the membrane proton channel. CF(1) has five subunits: alpha(3), beta(3), gamma(1), delta(1), epsilon(1). CF(0) has four main subunits: a, b, b' and c.</text>
</comment>
<comment type="subcellular location">
    <subcellularLocation>
        <location evidence="1">Plastid</location>
        <location evidence="1">Chloroplast thylakoid membrane</location>
        <topology evidence="1">Multi-pass membrane protein</topology>
    </subcellularLocation>
</comment>
<comment type="similarity">
    <text evidence="1">Belongs to the ATPase A chain family.</text>
</comment>
<gene>
    <name evidence="1" type="primary">atpI</name>
    <name type="ordered locus">Poptr_cp008</name>
</gene>
<keyword id="KW-0066">ATP synthesis</keyword>
<keyword id="KW-0138">CF(0)</keyword>
<keyword id="KW-0150">Chloroplast</keyword>
<keyword id="KW-0375">Hydrogen ion transport</keyword>
<keyword id="KW-0406">Ion transport</keyword>
<keyword id="KW-0472">Membrane</keyword>
<keyword id="KW-0934">Plastid</keyword>
<keyword id="KW-1185">Reference proteome</keyword>
<keyword id="KW-0793">Thylakoid</keyword>
<keyword id="KW-0812">Transmembrane</keyword>
<keyword id="KW-1133">Transmembrane helix</keyword>
<keyword id="KW-0813">Transport</keyword>
<dbReference type="EMBL" id="EF489041">
    <property type="protein sequence ID" value="ABO36690.1"/>
    <property type="molecule type" value="Genomic_DNA"/>
</dbReference>
<dbReference type="RefSeq" id="YP_001109487.1">
    <property type="nucleotide sequence ID" value="NC_009143.1"/>
</dbReference>
<dbReference type="SMR" id="A4GYP6"/>
<dbReference type="FunCoup" id="A4GYP6">
    <property type="interactions" value="172"/>
</dbReference>
<dbReference type="STRING" id="3694.A4GYP6"/>
<dbReference type="EnsemblPlants" id="Potri.013G139080.1.v4.1">
    <property type="protein sequence ID" value="Potri.013G139080.1.v4.1"/>
    <property type="gene ID" value="Potri.013G139080.v4.1"/>
</dbReference>
<dbReference type="GeneID" id="4929641"/>
<dbReference type="Gramene" id="Potri.013G139080.1.v4.1">
    <property type="protein sequence ID" value="Potri.013G139080.1.v4.1"/>
    <property type="gene ID" value="Potri.013G139080.v4.1"/>
</dbReference>
<dbReference type="KEGG" id="pop:4929641"/>
<dbReference type="InParanoid" id="A4GYP6"/>
<dbReference type="OMA" id="GFFWAAF"/>
<dbReference type="OrthoDB" id="2303at2759"/>
<dbReference type="Proteomes" id="UP000006729">
    <property type="component" value="Chloroplast"/>
</dbReference>
<dbReference type="ExpressionAtlas" id="A4GYP6">
    <property type="expression patterns" value="baseline and differential"/>
</dbReference>
<dbReference type="GO" id="GO:0009535">
    <property type="term" value="C:chloroplast thylakoid membrane"/>
    <property type="evidence" value="ECO:0007669"/>
    <property type="project" value="UniProtKB-SubCell"/>
</dbReference>
<dbReference type="GO" id="GO:0005886">
    <property type="term" value="C:plasma membrane"/>
    <property type="evidence" value="ECO:0007669"/>
    <property type="project" value="UniProtKB-UniRule"/>
</dbReference>
<dbReference type="GO" id="GO:0045259">
    <property type="term" value="C:proton-transporting ATP synthase complex"/>
    <property type="evidence" value="ECO:0007669"/>
    <property type="project" value="UniProtKB-KW"/>
</dbReference>
<dbReference type="GO" id="GO:0003729">
    <property type="term" value="F:mRNA binding"/>
    <property type="evidence" value="ECO:0007669"/>
    <property type="project" value="EnsemblPlants"/>
</dbReference>
<dbReference type="GO" id="GO:0046933">
    <property type="term" value="F:proton-transporting ATP synthase activity, rotational mechanism"/>
    <property type="evidence" value="ECO:0007669"/>
    <property type="project" value="UniProtKB-UniRule"/>
</dbReference>
<dbReference type="CDD" id="cd00310">
    <property type="entry name" value="ATP-synt_Fo_a_6"/>
    <property type="match status" value="1"/>
</dbReference>
<dbReference type="FunFam" id="1.20.120.220:FF:000001">
    <property type="entry name" value="ATP synthase subunit a, chloroplastic"/>
    <property type="match status" value="1"/>
</dbReference>
<dbReference type="Gene3D" id="1.20.120.220">
    <property type="entry name" value="ATP synthase, F0 complex, subunit A"/>
    <property type="match status" value="1"/>
</dbReference>
<dbReference type="HAMAP" id="MF_01393">
    <property type="entry name" value="ATP_synth_a_bact"/>
    <property type="match status" value="1"/>
</dbReference>
<dbReference type="InterPro" id="IPR045082">
    <property type="entry name" value="ATP_syn_F0_a_bact/chloroplast"/>
</dbReference>
<dbReference type="InterPro" id="IPR000568">
    <property type="entry name" value="ATP_synth_F0_asu"/>
</dbReference>
<dbReference type="InterPro" id="IPR023011">
    <property type="entry name" value="ATP_synth_F0_asu_AS"/>
</dbReference>
<dbReference type="InterPro" id="IPR035908">
    <property type="entry name" value="F0_ATP_A_sf"/>
</dbReference>
<dbReference type="NCBIfam" id="TIGR01131">
    <property type="entry name" value="ATP_synt_6_or_A"/>
    <property type="match status" value="1"/>
</dbReference>
<dbReference type="PANTHER" id="PTHR42823">
    <property type="entry name" value="ATP SYNTHASE SUBUNIT A, CHLOROPLASTIC"/>
    <property type="match status" value="1"/>
</dbReference>
<dbReference type="PANTHER" id="PTHR42823:SF3">
    <property type="entry name" value="ATP SYNTHASE SUBUNIT A, CHLOROPLASTIC"/>
    <property type="match status" value="1"/>
</dbReference>
<dbReference type="Pfam" id="PF00119">
    <property type="entry name" value="ATP-synt_A"/>
    <property type="match status" value="1"/>
</dbReference>
<dbReference type="PRINTS" id="PR00123">
    <property type="entry name" value="ATPASEA"/>
</dbReference>
<dbReference type="SUPFAM" id="SSF81336">
    <property type="entry name" value="F1F0 ATP synthase subunit A"/>
    <property type="match status" value="1"/>
</dbReference>
<dbReference type="PROSITE" id="PS00449">
    <property type="entry name" value="ATPASE_A"/>
    <property type="match status" value="1"/>
</dbReference>
<evidence type="ECO:0000255" key="1">
    <source>
        <dbReference type="HAMAP-Rule" id="MF_01393"/>
    </source>
</evidence>
<reference key="1">
    <citation type="journal article" date="2006" name="Science">
        <title>The genome of black cottonwood, Populus trichocarpa (Torr. &amp; Gray).</title>
        <authorList>
            <person name="Tuskan G.A."/>
            <person name="Difazio S."/>
            <person name="Jansson S."/>
            <person name="Bohlmann J."/>
            <person name="Grigoriev I."/>
            <person name="Hellsten U."/>
            <person name="Putnam N."/>
            <person name="Ralph S."/>
            <person name="Rombauts S."/>
            <person name="Salamov A."/>
            <person name="Schein J."/>
            <person name="Sterck L."/>
            <person name="Aerts A."/>
            <person name="Bhalerao R.R."/>
            <person name="Bhalerao R.P."/>
            <person name="Blaudez D."/>
            <person name="Boerjan W."/>
            <person name="Brun A."/>
            <person name="Brunner A."/>
            <person name="Busov V."/>
            <person name="Campbell M."/>
            <person name="Carlson J."/>
            <person name="Chalot M."/>
            <person name="Chapman J."/>
            <person name="Chen G.-L."/>
            <person name="Cooper D."/>
            <person name="Coutinho P.M."/>
            <person name="Couturier J."/>
            <person name="Covert S."/>
            <person name="Cronk Q."/>
            <person name="Cunningham R."/>
            <person name="Davis J."/>
            <person name="Degroeve S."/>
            <person name="Dejardin A."/>
            <person name="dePamphilis C.W."/>
            <person name="Detter J."/>
            <person name="Dirks B."/>
            <person name="Dubchak I."/>
            <person name="Duplessis S."/>
            <person name="Ehlting J."/>
            <person name="Ellis B."/>
            <person name="Gendler K."/>
            <person name="Goodstein D."/>
            <person name="Gribskov M."/>
            <person name="Grimwood J."/>
            <person name="Groover A."/>
            <person name="Gunter L."/>
            <person name="Hamberger B."/>
            <person name="Heinze B."/>
            <person name="Helariutta Y."/>
            <person name="Henrissat B."/>
            <person name="Holligan D."/>
            <person name="Holt R."/>
            <person name="Huang W."/>
            <person name="Islam-Faridi N."/>
            <person name="Jones S."/>
            <person name="Jones-Rhoades M."/>
            <person name="Jorgensen R."/>
            <person name="Joshi C."/>
            <person name="Kangasjaervi J."/>
            <person name="Karlsson J."/>
            <person name="Kelleher C."/>
            <person name="Kirkpatrick R."/>
            <person name="Kirst M."/>
            <person name="Kohler A."/>
            <person name="Kalluri U."/>
            <person name="Larimer F."/>
            <person name="Leebens-Mack J."/>
            <person name="Leple J.-C."/>
            <person name="Locascio P."/>
            <person name="Lou Y."/>
            <person name="Lucas S."/>
            <person name="Martin F."/>
            <person name="Montanini B."/>
            <person name="Napoli C."/>
            <person name="Nelson D.R."/>
            <person name="Nelson C."/>
            <person name="Nieminen K."/>
            <person name="Nilsson O."/>
            <person name="Pereda V."/>
            <person name="Peter G."/>
            <person name="Philippe R."/>
            <person name="Pilate G."/>
            <person name="Poliakov A."/>
            <person name="Razumovskaya J."/>
            <person name="Richardson P."/>
            <person name="Rinaldi C."/>
            <person name="Ritland K."/>
            <person name="Rouze P."/>
            <person name="Ryaboy D."/>
            <person name="Schmutz J."/>
            <person name="Schrader J."/>
            <person name="Segerman B."/>
            <person name="Shin H."/>
            <person name="Siddiqui A."/>
            <person name="Sterky F."/>
            <person name="Terry A."/>
            <person name="Tsai C.-J."/>
            <person name="Uberbacher E."/>
            <person name="Unneberg P."/>
            <person name="Vahala J."/>
            <person name="Wall K."/>
            <person name="Wessler S."/>
            <person name="Yang G."/>
            <person name="Yin T."/>
            <person name="Douglas C."/>
            <person name="Marra M."/>
            <person name="Sandberg G."/>
            <person name="Van de Peer Y."/>
            <person name="Rokhsar D.S."/>
        </authorList>
    </citation>
    <scope>NUCLEOTIDE SEQUENCE [LARGE SCALE GENOMIC DNA]</scope>
    <source>
        <strain>cv. Nisqually</strain>
    </source>
</reference>
<organism>
    <name type="scientific">Populus trichocarpa</name>
    <name type="common">Western balsam poplar</name>
    <name type="synonym">Populus balsamifera subsp. trichocarpa</name>
    <dbReference type="NCBI Taxonomy" id="3694"/>
    <lineage>
        <taxon>Eukaryota</taxon>
        <taxon>Viridiplantae</taxon>
        <taxon>Streptophyta</taxon>
        <taxon>Embryophyta</taxon>
        <taxon>Tracheophyta</taxon>
        <taxon>Spermatophyta</taxon>
        <taxon>Magnoliopsida</taxon>
        <taxon>eudicotyledons</taxon>
        <taxon>Gunneridae</taxon>
        <taxon>Pentapetalae</taxon>
        <taxon>rosids</taxon>
        <taxon>fabids</taxon>
        <taxon>Malpighiales</taxon>
        <taxon>Salicaceae</taxon>
        <taxon>Saliceae</taxon>
        <taxon>Populus</taxon>
    </lineage>
</organism>